<proteinExistence type="inferred from homology"/>
<keyword id="KW-0044">Antibiotic</keyword>
<keyword id="KW-0929">Antimicrobial</keyword>
<keyword id="KW-0211">Defensin</keyword>
<keyword id="KW-1015">Disulfide bond</keyword>
<keyword id="KW-1185">Reference proteome</keyword>
<keyword id="KW-0964">Secreted</keyword>
<keyword id="KW-0732">Signal</keyword>
<comment type="function">
    <text evidence="1">Has antibacterial activity.</text>
</comment>
<comment type="subcellular location">
    <subcellularLocation>
        <location evidence="1">Secreted</location>
    </subcellularLocation>
</comment>
<comment type="similarity">
    <text evidence="3">Belongs to the beta-defensin family.</text>
</comment>
<sequence>MKIFFFIFAALILLAQIFQARTAIHRALICKRMEGHCEAECLTFEVKIGGCRAELTPYCCKKRKKD</sequence>
<gene>
    <name type="primary">DEFB107A</name>
    <name type="synonym">DEFB107</name>
</gene>
<feature type="signal peptide" evidence="2">
    <location>
        <begin position="1"/>
        <end position="22"/>
    </location>
</feature>
<feature type="peptide" id="PRO_0000289820" description="Beta-defensin 107A">
    <location>
        <begin position="23"/>
        <end position="66"/>
    </location>
</feature>
<feature type="disulfide bond" evidence="1">
    <location>
        <begin position="37"/>
        <end position="51"/>
    </location>
</feature>
<feature type="disulfide bond" evidence="1">
    <location>
        <begin position="41"/>
        <end position="60"/>
    </location>
</feature>
<organism>
    <name type="scientific">Macaca fascicularis</name>
    <name type="common">Crab-eating macaque</name>
    <name type="synonym">Cynomolgus monkey</name>
    <dbReference type="NCBI Taxonomy" id="9541"/>
    <lineage>
        <taxon>Eukaryota</taxon>
        <taxon>Metazoa</taxon>
        <taxon>Chordata</taxon>
        <taxon>Craniata</taxon>
        <taxon>Vertebrata</taxon>
        <taxon>Euteleostomi</taxon>
        <taxon>Mammalia</taxon>
        <taxon>Eutheria</taxon>
        <taxon>Euarchontoglires</taxon>
        <taxon>Primates</taxon>
        <taxon>Haplorrhini</taxon>
        <taxon>Catarrhini</taxon>
        <taxon>Cercopithecidae</taxon>
        <taxon>Cercopithecinae</taxon>
        <taxon>Macaca</taxon>
    </lineage>
</organism>
<protein>
    <recommendedName>
        <fullName>Beta-defensin 107A</fullName>
    </recommendedName>
    <alternativeName>
        <fullName>Defensin, beta 107</fullName>
    </alternativeName>
    <alternativeName>
        <fullName>Defensin, beta 107A</fullName>
    </alternativeName>
</protein>
<name>D107A_MACFA</name>
<accession>A4H218</accession>
<dbReference type="EMBL" id="AM410123">
    <property type="protein sequence ID" value="CAL68938.1"/>
    <property type="molecule type" value="Genomic_DNA"/>
</dbReference>
<dbReference type="SMR" id="A4H218"/>
<dbReference type="STRING" id="9541.ENSMFAP00000041589"/>
<dbReference type="eggNOG" id="ENOG502TF47">
    <property type="taxonomic scope" value="Eukaryota"/>
</dbReference>
<dbReference type="Proteomes" id="UP000233100">
    <property type="component" value="Unplaced"/>
</dbReference>
<dbReference type="GO" id="GO:0005576">
    <property type="term" value="C:extracellular region"/>
    <property type="evidence" value="ECO:0007669"/>
    <property type="project" value="UniProtKB-SubCell"/>
</dbReference>
<dbReference type="GO" id="GO:0042742">
    <property type="term" value="P:defense response to bacterium"/>
    <property type="evidence" value="ECO:0007669"/>
    <property type="project" value="UniProtKB-KW"/>
</dbReference>
<dbReference type="GO" id="GO:0045087">
    <property type="term" value="P:innate immune response"/>
    <property type="evidence" value="ECO:0007669"/>
    <property type="project" value="InterPro"/>
</dbReference>
<dbReference type="InterPro" id="IPR025933">
    <property type="entry name" value="Beta_defensin_dom"/>
</dbReference>
<dbReference type="Pfam" id="PF13841">
    <property type="entry name" value="Defensin_beta_2"/>
    <property type="match status" value="1"/>
</dbReference>
<reference key="1">
    <citation type="submission" date="2006-11" db="EMBL/GenBank/DDBJ databases">
        <title>Evolution and sequence variation of human beta-defensin genes.</title>
        <authorList>
            <person name="Hollox E.J."/>
            <person name="Armour J.A.L."/>
        </authorList>
    </citation>
    <scope>NUCLEOTIDE SEQUENCE [GENOMIC DNA]</scope>
</reference>
<evidence type="ECO:0000250" key="1"/>
<evidence type="ECO:0000255" key="2"/>
<evidence type="ECO:0000305" key="3"/>